<dbReference type="EMBL" id="U17985">
    <property type="protein sequence ID" value="AAA57202.1"/>
    <property type="molecule type" value="mRNA"/>
</dbReference>
<dbReference type="EMBL" id="U40709">
    <property type="protein sequence ID" value="AAA91176.1"/>
    <property type="molecule type" value="mRNA"/>
</dbReference>
<dbReference type="EMBL" id="Y18374">
    <property type="protein sequence ID" value="CAB42647.1"/>
    <property type="molecule type" value="Genomic_DNA"/>
</dbReference>
<dbReference type="EMBL" id="AY522555">
    <property type="protein sequence ID" value="AAS91801.1"/>
    <property type="molecule type" value="Genomic_DNA"/>
</dbReference>
<dbReference type="EMBL" id="AY522554">
    <property type="protein sequence ID" value="AAS91800.1"/>
    <property type="molecule type" value="mRNA"/>
</dbReference>
<dbReference type="EMBL" id="U22948">
    <property type="protein sequence ID" value="AAA64413.1"/>
    <property type="molecule type" value="Genomic_DNA"/>
</dbReference>
<dbReference type="EMBL" id="AF153345">
    <property type="protein sequence ID" value="AAD34624.1"/>
    <property type="molecule type" value="mRNA"/>
</dbReference>
<dbReference type="EMBL" id="AK139417">
    <property type="protein sequence ID" value="BAE24003.1"/>
    <property type="molecule type" value="mRNA"/>
</dbReference>
<dbReference type="EMBL" id="BC070447">
    <property type="protein sequence ID" value="AAH70447.1"/>
    <property type="molecule type" value="mRNA"/>
</dbReference>
<dbReference type="EMBL" id="BC079564">
    <property type="protein sequence ID" value="AAH79564.1"/>
    <property type="molecule type" value="mRNA"/>
</dbReference>
<dbReference type="CCDS" id="CCDS18025.1"/>
<dbReference type="RefSeq" id="NP_001341949.1">
    <property type="nucleotide sequence ID" value="NM_001355020.2"/>
</dbReference>
<dbReference type="RefSeq" id="NP_001341950.1">
    <property type="nucleotide sequence ID" value="NM_001355021.2"/>
</dbReference>
<dbReference type="RefSeq" id="NP_001352810.1">
    <property type="nucleotide sequence ID" value="NM_001365881.1"/>
</dbReference>
<dbReference type="RefSeq" id="NP_031752.1">
    <property type="nucleotide sequence ID" value="NM_007726.5"/>
</dbReference>
<dbReference type="RefSeq" id="XP_006537654.1">
    <property type="nucleotide sequence ID" value="XM_006537591.4"/>
</dbReference>
<dbReference type="RefSeq" id="XP_006537655.1">
    <property type="nucleotide sequence ID" value="XM_006537592.5"/>
</dbReference>
<dbReference type="RefSeq" id="XP_006537656.1">
    <property type="nucleotide sequence ID" value="XM_006537593.4"/>
</dbReference>
<dbReference type="RefSeq" id="XP_006537657.1">
    <property type="nucleotide sequence ID" value="XM_006537594.4"/>
</dbReference>
<dbReference type="RefSeq" id="XP_006537658.1">
    <property type="nucleotide sequence ID" value="XM_006537595.4"/>
</dbReference>
<dbReference type="RefSeq" id="XP_017175428.1">
    <property type="nucleotide sequence ID" value="XM_017319939.1"/>
</dbReference>
<dbReference type="RefSeq" id="XP_030109009.1">
    <property type="nucleotide sequence ID" value="XM_030253149.1"/>
</dbReference>
<dbReference type="RefSeq" id="XP_036019518.1">
    <property type="nucleotide sequence ID" value="XM_036163625.1"/>
</dbReference>
<dbReference type="RefSeq" id="XP_036019519.1">
    <property type="nucleotide sequence ID" value="XM_036163626.1"/>
</dbReference>
<dbReference type="SMR" id="P47746"/>
<dbReference type="BioGRID" id="198793">
    <property type="interactions" value="3"/>
</dbReference>
<dbReference type="CORUM" id="P47746"/>
<dbReference type="FunCoup" id="P47746">
    <property type="interactions" value="1571"/>
</dbReference>
<dbReference type="IntAct" id="P47746">
    <property type="interactions" value="5"/>
</dbReference>
<dbReference type="STRING" id="10090.ENSMUSP00000055797"/>
<dbReference type="BindingDB" id="P47746"/>
<dbReference type="ChEMBL" id="CHEMBL3037"/>
<dbReference type="DrugCentral" id="P47746"/>
<dbReference type="GuidetoPHARMACOLOGY" id="56"/>
<dbReference type="GlyCosmos" id="P47746">
    <property type="glycosylation" value="2 sites, No reported glycans"/>
</dbReference>
<dbReference type="GlyGen" id="P47746">
    <property type="glycosylation" value="5 sites, 1 N-linked glycan (1 site), 1 O-linked glycan (3 sites)"/>
</dbReference>
<dbReference type="iPTMnet" id="P47746"/>
<dbReference type="PhosphoSitePlus" id="P47746"/>
<dbReference type="SwissPalm" id="P47746"/>
<dbReference type="PaxDb" id="10090-ENSMUSP00000055797"/>
<dbReference type="PeptideAtlas" id="P47746"/>
<dbReference type="ProteomicsDB" id="285519"/>
<dbReference type="Antibodypedia" id="3355">
    <property type="antibodies" value="713 antibodies from 41 providers"/>
</dbReference>
<dbReference type="DNASU" id="12801"/>
<dbReference type="Ensembl" id="ENSMUST00000057188.7">
    <property type="protein sequence ID" value="ENSMUSP00000055797.7"/>
    <property type="gene ID" value="ENSMUSG00000044288.7"/>
</dbReference>
<dbReference type="Ensembl" id="ENSMUST00000084736.3">
    <property type="protein sequence ID" value="ENSMUSP00000081787.3"/>
    <property type="gene ID" value="ENSMUSG00000044288.7"/>
</dbReference>
<dbReference type="GeneID" id="12801"/>
<dbReference type="KEGG" id="mmu:12801"/>
<dbReference type="UCSC" id="uc008sfw.1">
    <property type="organism name" value="mouse"/>
</dbReference>
<dbReference type="AGR" id="MGI:104615"/>
<dbReference type="CTD" id="1268"/>
<dbReference type="MGI" id="MGI:104615">
    <property type="gene designation" value="Cnr1"/>
</dbReference>
<dbReference type="VEuPathDB" id="HostDB:ENSMUSG00000044288"/>
<dbReference type="eggNOG" id="KOG3656">
    <property type="taxonomic scope" value="Eukaryota"/>
</dbReference>
<dbReference type="GeneTree" id="ENSGT01120000271819"/>
<dbReference type="HOGENOM" id="CLU_009579_7_0_1"/>
<dbReference type="InParanoid" id="P47746"/>
<dbReference type="OMA" id="HKHANSA"/>
<dbReference type="OrthoDB" id="5966748at2759"/>
<dbReference type="PhylomeDB" id="P47746"/>
<dbReference type="TreeFam" id="TF330052"/>
<dbReference type="Reactome" id="R-MMU-373076">
    <property type="pathway name" value="Class A/1 (Rhodopsin-like receptors)"/>
</dbReference>
<dbReference type="Reactome" id="R-MMU-418594">
    <property type="pathway name" value="G alpha (i) signalling events"/>
</dbReference>
<dbReference type="BioGRID-ORCS" id="12801">
    <property type="hits" value="5 hits in 76 CRISPR screens"/>
</dbReference>
<dbReference type="PRO" id="PR:P47746"/>
<dbReference type="Proteomes" id="UP000000589">
    <property type="component" value="Chromosome 4"/>
</dbReference>
<dbReference type="RNAct" id="P47746">
    <property type="molecule type" value="protein"/>
</dbReference>
<dbReference type="Bgee" id="ENSMUSG00000044288">
    <property type="expression patterns" value="Expressed in cerebellum lobe and 176 other cell types or tissues"/>
</dbReference>
<dbReference type="ExpressionAtlas" id="P47746">
    <property type="expression patterns" value="baseline and differential"/>
</dbReference>
<dbReference type="GO" id="GO:0015629">
    <property type="term" value="C:actin cytoskeleton"/>
    <property type="evidence" value="ECO:0007669"/>
    <property type="project" value="Ensembl"/>
</dbReference>
<dbReference type="GO" id="GO:0030424">
    <property type="term" value="C:axon"/>
    <property type="evidence" value="ECO:0000314"/>
    <property type="project" value="MGI"/>
</dbReference>
<dbReference type="GO" id="GO:0098982">
    <property type="term" value="C:GABA-ergic synapse"/>
    <property type="evidence" value="ECO:0000314"/>
    <property type="project" value="SynGO"/>
</dbReference>
<dbReference type="GO" id="GO:0098978">
    <property type="term" value="C:glutamatergic synapse"/>
    <property type="evidence" value="ECO:0000314"/>
    <property type="project" value="SynGO"/>
</dbReference>
<dbReference type="GO" id="GO:0030426">
    <property type="term" value="C:growth cone"/>
    <property type="evidence" value="ECO:0000314"/>
    <property type="project" value="MGI"/>
</dbReference>
<dbReference type="GO" id="GO:0005741">
    <property type="term" value="C:mitochondrial outer membrane"/>
    <property type="evidence" value="ECO:0007669"/>
    <property type="project" value="UniProtKB-SubCell"/>
</dbReference>
<dbReference type="GO" id="GO:0005739">
    <property type="term" value="C:mitochondrion"/>
    <property type="evidence" value="ECO:0000314"/>
    <property type="project" value="MGI"/>
</dbReference>
<dbReference type="GO" id="GO:0042734">
    <property type="term" value="C:presynaptic membrane"/>
    <property type="evidence" value="ECO:0000314"/>
    <property type="project" value="SynGO"/>
</dbReference>
<dbReference type="GO" id="GO:0004949">
    <property type="term" value="F:cannabinoid receptor activity"/>
    <property type="evidence" value="ECO:0000315"/>
    <property type="project" value="MGI"/>
</dbReference>
<dbReference type="GO" id="GO:0042802">
    <property type="term" value="F:identical protein binding"/>
    <property type="evidence" value="ECO:0007669"/>
    <property type="project" value="Ensembl"/>
</dbReference>
<dbReference type="GO" id="GO:0007188">
    <property type="term" value="P:adenylate cyclase-modulating G protein-coupled receptor signaling pathway"/>
    <property type="evidence" value="ECO:0000250"/>
    <property type="project" value="UniProtKB"/>
</dbReference>
<dbReference type="GO" id="GO:0007413">
    <property type="term" value="P:axonal fasciculation"/>
    <property type="evidence" value="ECO:0000315"/>
    <property type="project" value="MGI"/>
</dbReference>
<dbReference type="GO" id="GO:0042593">
    <property type="term" value="P:glucose homeostasis"/>
    <property type="evidence" value="ECO:0000353"/>
    <property type="project" value="MGI"/>
</dbReference>
<dbReference type="GO" id="GO:0099509">
    <property type="term" value="P:regulation of presynaptic cytosolic calcium ion concentration"/>
    <property type="evidence" value="ECO:0000314"/>
    <property type="project" value="SynGO"/>
</dbReference>
<dbReference type="GO" id="GO:0098921">
    <property type="term" value="P:retrograde trans-synaptic signaling by endocannabinoid"/>
    <property type="evidence" value="ECO:0000314"/>
    <property type="project" value="SynGO"/>
</dbReference>
<dbReference type="CDD" id="cd15340">
    <property type="entry name" value="7tmA_CB1"/>
    <property type="match status" value="1"/>
</dbReference>
<dbReference type="FunFam" id="1.20.1070.10:FF:000072">
    <property type="entry name" value="Cannabinoid receptor 1"/>
    <property type="match status" value="1"/>
</dbReference>
<dbReference type="Gene3D" id="1.20.1070.10">
    <property type="entry name" value="Rhodopsin 7-helix transmembrane proteins"/>
    <property type="match status" value="1"/>
</dbReference>
<dbReference type="InterPro" id="IPR000810">
    <property type="entry name" value="Canbinoid_rcpt_1"/>
</dbReference>
<dbReference type="InterPro" id="IPR002230">
    <property type="entry name" value="Cnbnoid_rcpt"/>
</dbReference>
<dbReference type="InterPro" id="IPR000276">
    <property type="entry name" value="GPCR_Rhodpsn"/>
</dbReference>
<dbReference type="InterPro" id="IPR017452">
    <property type="entry name" value="GPCR_Rhodpsn_7TM"/>
</dbReference>
<dbReference type="PANTHER" id="PTHR22750">
    <property type="entry name" value="G-PROTEIN COUPLED RECEPTOR"/>
    <property type="match status" value="1"/>
</dbReference>
<dbReference type="Pfam" id="PF00001">
    <property type="entry name" value="7tm_1"/>
    <property type="match status" value="1"/>
</dbReference>
<dbReference type="PIRSF" id="PIRSF037995">
    <property type="entry name" value="Cnoid_rcpt_1"/>
    <property type="match status" value="1"/>
</dbReference>
<dbReference type="PRINTS" id="PR00522">
    <property type="entry name" value="CANABINOID1R"/>
</dbReference>
<dbReference type="PRINTS" id="PR00362">
    <property type="entry name" value="CANNABINOIDR"/>
</dbReference>
<dbReference type="PRINTS" id="PR00237">
    <property type="entry name" value="GPCRRHODOPSN"/>
</dbReference>
<dbReference type="SMART" id="SM01381">
    <property type="entry name" value="7TM_GPCR_Srsx"/>
    <property type="match status" value="1"/>
</dbReference>
<dbReference type="SUPFAM" id="SSF81321">
    <property type="entry name" value="Family A G protein-coupled receptor-like"/>
    <property type="match status" value="1"/>
</dbReference>
<dbReference type="PROSITE" id="PS00237">
    <property type="entry name" value="G_PROTEIN_RECEP_F1_1"/>
    <property type="match status" value="1"/>
</dbReference>
<dbReference type="PROSITE" id="PS50262">
    <property type="entry name" value="G_PROTEIN_RECEP_F1_2"/>
    <property type="match status" value="1"/>
</dbReference>
<evidence type="ECO:0000250" key="1">
    <source>
        <dbReference type="UniProtKB" id="O02777"/>
    </source>
</evidence>
<evidence type="ECO:0000250" key="2">
    <source>
        <dbReference type="UniProtKB" id="P20272"/>
    </source>
</evidence>
<evidence type="ECO:0000250" key="3">
    <source>
        <dbReference type="UniProtKB" id="P21554"/>
    </source>
</evidence>
<evidence type="ECO:0000255" key="4"/>
<evidence type="ECO:0000255" key="5">
    <source>
        <dbReference type="PROSITE-ProRule" id="PRU00521"/>
    </source>
</evidence>
<evidence type="ECO:0000269" key="6">
    <source>
    </source>
</evidence>
<evidence type="ECO:0000269" key="7">
    <source>
    </source>
</evidence>
<evidence type="ECO:0000269" key="8">
    <source>
    </source>
</evidence>
<evidence type="ECO:0000269" key="9">
    <source>
    </source>
</evidence>
<evidence type="ECO:0000269" key="10">
    <source>
    </source>
</evidence>
<evidence type="ECO:0000269" key="11">
    <source>
    </source>
</evidence>
<evidence type="ECO:0000269" key="12">
    <source>
    </source>
</evidence>
<evidence type="ECO:0000269" key="13">
    <source>
    </source>
</evidence>
<evidence type="ECO:0000269" key="14">
    <source>
    </source>
</evidence>
<evidence type="ECO:0000269" key="15">
    <source>
    </source>
</evidence>
<evidence type="ECO:0000269" key="16">
    <source>
    </source>
</evidence>
<evidence type="ECO:0000269" key="17">
    <source>
    </source>
</evidence>
<evidence type="ECO:0000269" key="18">
    <source>
    </source>
</evidence>
<evidence type="ECO:0000269" key="19">
    <source>
    </source>
</evidence>
<evidence type="ECO:0000305" key="20"/>
<evidence type="ECO:0007744" key="21">
    <source>
    </source>
</evidence>
<feature type="chain" id="PRO_0000069316" description="Cannabinoid receptor 1">
    <location>
        <begin position="1"/>
        <end position="473"/>
    </location>
</feature>
<feature type="topological domain" description="Extracellular" evidence="3">
    <location>
        <begin position="1"/>
        <end position="121"/>
    </location>
</feature>
<feature type="transmembrane region" description="Helical" evidence="3">
    <location>
        <begin position="122"/>
        <end position="142"/>
    </location>
</feature>
<feature type="topological domain" description="Cytoplasmic" evidence="3">
    <location>
        <begin position="143"/>
        <end position="155"/>
    </location>
</feature>
<feature type="transmembrane region" description="Helical" evidence="3">
    <location>
        <begin position="156"/>
        <end position="176"/>
    </location>
</feature>
<feature type="topological domain" description="Extracellular" evidence="3">
    <location>
        <begin position="177"/>
        <end position="188"/>
    </location>
</feature>
<feature type="transmembrane region" description="Helical" evidence="3">
    <location>
        <begin position="189"/>
        <end position="209"/>
    </location>
</feature>
<feature type="topological domain" description="Cytoplasmic" evidence="3">
    <location>
        <begin position="210"/>
        <end position="233"/>
    </location>
</feature>
<feature type="transmembrane region" description="Helical" evidence="3">
    <location>
        <begin position="234"/>
        <end position="254"/>
    </location>
</feature>
<feature type="topological domain" description="Extracellular" evidence="3">
    <location>
        <begin position="255"/>
        <end position="278"/>
    </location>
</feature>
<feature type="transmembrane region" description="Helical" evidence="3">
    <location>
        <begin position="279"/>
        <end position="299"/>
    </location>
</feature>
<feature type="topological domain" description="Cytoplasmic" evidence="3">
    <location>
        <begin position="300"/>
        <end position="345"/>
    </location>
</feature>
<feature type="transmembrane region" description="Helical" evidence="3">
    <location>
        <begin position="346"/>
        <end position="366"/>
    </location>
</feature>
<feature type="topological domain" description="Extracellular" evidence="3">
    <location>
        <begin position="367"/>
        <end position="378"/>
    </location>
</feature>
<feature type="transmembrane region" description="Helical" evidence="3">
    <location>
        <begin position="379"/>
        <end position="399"/>
    </location>
</feature>
<feature type="topological domain" description="Cytoplasmic" evidence="3">
    <location>
        <begin position="400"/>
        <end position="473"/>
    </location>
</feature>
<feature type="region of interest" description="Required for mitochondrial localization" evidence="17">
    <location>
        <begin position="2"/>
        <end position="23"/>
    </location>
</feature>
<feature type="modified residue" description="Phosphoserine" evidence="21">
    <location>
        <position position="426"/>
    </location>
</feature>
<feature type="modified residue" description="Phosphoserine" evidence="21">
    <location>
        <position position="430"/>
    </location>
</feature>
<feature type="lipid moiety-binding region" description="S-palmitoyl cysteine" evidence="3">
    <location>
        <position position="416"/>
    </location>
</feature>
<feature type="glycosylation site" description="N-linked (GlcNAc...) asparagine" evidence="4">
    <location>
        <position position="78"/>
    </location>
</feature>
<feature type="glycosylation site" description="N-linked (GlcNAc...) asparagine" evidence="4">
    <location>
        <position position="84"/>
    </location>
</feature>
<feature type="mutagenesis site" description="Loss of mitochondrial localization. Loss of cannabinoid-induced reduction of respiration, mitochondrial mobility, synaptic transmission and memory formation. No effect on MAPK/ERK signaling, nor on G protein activation." evidence="17">
    <location>
        <begin position="2"/>
        <end position="23"/>
    </location>
</feature>
<feature type="sequence conflict" description="In Ref. 1; AAA57202." evidence="20" ref="1">
    <original>A</original>
    <variation>G</variation>
    <location>
        <position position="9"/>
    </location>
</feature>
<feature type="sequence conflict" description="In Ref. 1; AAA57202." evidence="20" ref="1">
    <original>S</original>
    <variation>R</variation>
    <location>
        <position position="115"/>
    </location>
</feature>
<feature type="sequence conflict" description="In Ref. 1; AAA57202." evidence="20" ref="1">
    <original>T</original>
    <variation>R</variation>
    <location>
        <position position="211"/>
    </location>
</feature>
<protein>
    <recommendedName>
        <fullName>Cannabinoid receptor 1</fullName>
        <shortName>CB-R</shortName>
        <shortName>CB1</shortName>
    </recommendedName>
    <alternativeName>
        <fullName>Brain-type cannabinoid receptor</fullName>
    </alternativeName>
</protein>
<organism>
    <name type="scientific">Mus musculus</name>
    <name type="common">Mouse</name>
    <dbReference type="NCBI Taxonomy" id="10090"/>
    <lineage>
        <taxon>Eukaryota</taxon>
        <taxon>Metazoa</taxon>
        <taxon>Chordata</taxon>
        <taxon>Craniata</taxon>
        <taxon>Vertebrata</taxon>
        <taxon>Euteleostomi</taxon>
        <taxon>Mammalia</taxon>
        <taxon>Eutheria</taxon>
        <taxon>Euarchontoglires</taxon>
        <taxon>Glires</taxon>
        <taxon>Rodentia</taxon>
        <taxon>Myomorpha</taxon>
        <taxon>Muroidea</taxon>
        <taxon>Muridae</taxon>
        <taxon>Murinae</taxon>
        <taxon>Mus</taxon>
        <taxon>Mus</taxon>
    </lineage>
</organism>
<sequence length="473" mass="52831">MKSILDGLADTTFRTITTDLLYVGSNDIQYEDIKGDMASKLGYFPQKFPLTSFRGSPFQEKMTAGDNSPLVPAGDTTNITEFYNKSLSSFKENEDNIQCGENFMDMECFMILNPSQQLAIAVLSLTLGTFTVLENLLVLCVILHSRSLRCRPSYHFIGSLAVADLLGSVIFVYSFVDFHVFHRKDSPNVFLFKLGGVTASFTASVGSLFLTAIDRYISIHRPLAYKRIVTRPKAVVAFCLMWTIAIVIAVLPLLGWNCKKLQSVCSDIFPLIDETYLMFWIGVTSVLLLFIVYAYMYILWKAHSHAVRMIQRGTQKSIIIHTSEDGKVQVTRPDQARMDIRLAKTLVLILVVLIICWGPLLAIMVYDVFGKMNKLIKTVFAFCSMLCLLNSTVNPIIYALRSKDLRHAFRSMFPSCEGTAQPLDNSMGDSDCLHKHANNTASMHRAAESCIKSTVKIAKVTMSVSTDTSAEAL</sequence>
<reference key="1">
    <citation type="journal article" date="1995" name="DNA Seq.">
        <title>Cloning and sequencing of a cDNA encoding the mouse brain-type cannabinoid receptor protein.</title>
        <authorList>
            <person name="Chakrabarti A."/>
            <person name="Onaivi E.S."/>
            <person name="Chaudhuri G."/>
        </authorList>
    </citation>
    <scope>NUCLEOTIDE SEQUENCE [MRNA]</scope>
    <source>
        <strain>C57BL/6J</strain>
        <tissue>Brain</tissue>
    </source>
</reference>
<reference key="2">
    <citation type="journal article" date="1996" name="Neurosci. Lett.">
        <title>Determination of the cannabinoid receptors in mouse x rat hybridoma NG108-15 cells and rat GH4C1 cells.</title>
        <authorList>
            <person name="Ho B.Y."/>
            <person name="Zhao J."/>
        </authorList>
    </citation>
    <scope>NUCLEOTIDE SEQUENCE [MRNA]</scope>
    <scope>FUNCTION</scope>
</reference>
<reference key="3">
    <citation type="journal article" date="1999" name="Science">
        <title>Unresponsiveness to cannabinoids and reduced addictive effects of opiates in CB1 receptor knockout mice.</title>
        <authorList>
            <person name="Ledent C."/>
            <person name="Valverde O."/>
            <person name="Cossu G."/>
            <person name="Petitet F."/>
            <person name="Aubert J.F."/>
            <person name="Beslot F."/>
            <person name="Boehme G.A."/>
            <person name="Imperato A."/>
            <person name="Pedrazzini T."/>
            <person name="Roques B.P."/>
            <person name="Vassart G."/>
            <person name="Fratta W."/>
            <person name="Parmentier M."/>
        </authorList>
    </citation>
    <scope>NUCLEOTIDE SEQUENCE [GENOMIC DNA]</scope>
    <scope>FUNCTION</scope>
    <scope>DISRUPTION PHENOTYPE</scope>
    <source>
        <strain>129/Sv</strain>
    </source>
</reference>
<reference key="4">
    <citation type="journal article" date="2004" name="Eur. J. Biochem.">
        <title>Structure, expression and regulation of the cannabinoid receptor gene (CB1) in Huntington's disease transgenic mice.</title>
        <authorList>
            <person name="McCaw E.A."/>
            <person name="Hu H."/>
            <person name="Gomez G.T."/>
            <person name="Hebb A.L."/>
            <person name="Kelly M.E."/>
            <person name="Denovan-Wright E.M."/>
        </authorList>
    </citation>
    <scope>NUCLEOTIDE SEQUENCE [GENOMIC DNA / MRNA]</scope>
    <scope>TISSUE SPECIFICITY</scope>
    <source>
        <strain>C57BL/6 X CBA</strain>
    </source>
</reference>
<reference key="5">
    <citation type="submission" date="1995-03" db="EMBL/GenBank/DDBJ databases">
        <authorList>
            <person name="Bonner T.I."/>
        </authorList>
    </citation>
    <scope>NUCLEOTIDE SEQUENCE [GENOMIC DNA]</scope>
    <source>
        <strain>129</strain>
    </source>
</reference>
<reference key="6">
    <citation type="submission" date="1999-05" db="EMBL/GenBank/DDBJ databases">
        <title>cDNA cloning and expression analysis of mouse cannabinoid receptor (CB1) gene.</title>
        <authorList>
            <person name="Yuan Z.-Q."/>
            <person name="Li L."/>
            <person name="Qiu B.-S."/>
            <person name="Song D.-K."/>
        </authorList>
    </citation>
    <scope>NUCLEOTIDE SEQUENCE [MRNA]</scope>
</reference>
<reference key="7">
    <citation type="journal article" date="2005" name="Science">
        <title>The transcriptional landscape of the mammalian genome.</title>
        <authorList>
            <person name="Carninci P."/>
            <person name="Kasukawa T."/>
            <person name="Katayama S."/>
            <person name="Gough J."/>
            <person name="Frith M.C."/>
            <person name="Maeda N."/>
            <person name="Oyama R."/>
            <person name="Ravasi T."/>
            <person name="Lenhard B."/>
            <person name="Wells C."/>
            <person name="Kodzius R."/>
            <person name="Shimokawa K."/>
            <person name="Bajic V.B."/>
            <person name="Brenner S.E."/>
            <person name="Batalov S."/>
            <person name="Forrest A.R."/>
            <person name="Zavolan M."/>
            <person name="Davis M.J."/>
            <person name="Wilming L.G."/>
            <person name="Aidinis V."/>
            <person name="Allen J.E."/>
            <person name="Ambesi-Impiombato A."/>
            <person name="Apweiler R."/>
            <person name="Aturaliya R.N."/>
            <person name="Bailey T.L."/>
            <person name="Bansal M."/>
            <person name="Baxter L."/>
            <person name="Beisel K.W."/>
            <person name="Bersano T."/>
            <person name="Bono H."/>
            <person name="Chalk A.M."/>
            <person name="Chiu K.P."/>
            <person name="Choudhary V."/>
            <person name="Christoffels A."/>
            <person name="Clutterbuck D.R."/>
            <person name="Crowe M.L."/>
            <person name="Dalla E."/>
            <person name="Dalrymple B.P."/>
            <person name="de Bono B."/>
            <person name="Della Gatta G."/>
            <person name="di Bernardo D."/>
            <person name="Down T."/>
            <person name="Engstrom P."/>
            <person name="Fagiolini M."/>
            <person name="Faulkner G."/>
            <person name="Fletcher C.F."/>
            <person name="Fukushima T."/>
            <person name="Furuno M."/>
            <person name="Futaki S."/>
            <person name="Gariboldi M."/>
            <person name="Georgii-Hemming P."/>
            <person name="Gingeras T.R."/>
            <person name="Gojobori T."/>
            <person name="Green R.E."/>
            <person name="Gustincich S."/>
            <person name="Harbers M."/>
            <person name="Hayashi Y."/>
            <person name="Hensch T.K."/>
            <person name="Hirokawa N."/>
            <person name="Hill D."/>
            <person name="Huminiecki L."/>
            <person name="Iacono M."/>
            <person name="Ikeo K."/>
            <person name="Iwama A."/>
            <person name="Ishikawa T."/>
            <person name="Jakt M."/>
            <person name="Kanapin A."/>
            <person name="Katoh M."/>
            <person name="Kawasawa Y."/>
            <person name="Kelso J."/>
            <person name="Kitamura H."/>
            <person name="Kitano H."/>
            <person name="Kollias G."/>
            <person name="Krishnan S.P."/>
            <person name="Kruger A."/>
            <person name="Kummerfeld S.K."/>
            <person name="Kurochkin I.V."/>
            <person name="Lareau L.F."/>
            <person name="Lazarevic D."/>
            <person name="Lipovich L."/>
            <person name="Liu J."/>
            <person name="Liuni S."/>
            <person name="McWilliam S."/>
            <person name="Madan Babu M."/>
            <person name="Madera M."/>
            <person name="Marchionni L."/>
            <person name="Matsuda H."/>
            <person name="Matsuzawa S."/>
            <person name="Miki H."/>
            <person name="Mignone F."/>
            <person name="Miyake S."/>
            <person name="Morris K."/>
            <person name="Mottagui-Tabar S."/>
            <person name="Mulder N."/>
            <person name="Nakano N."/>
            <person name="Nakauchi H."/>
            <person name="Ng P."/>
            <person name="Nilsson R."/>
            <person name="Nishiguchi S."/>
            <person name="Nishikawa S."/>
            <person name="Nori F."/>
            <person name="Ohara O."/>
            <person name="Okazaki Y."/>
            <person name="Orlando V."/>
            <person name="Pang K.C."/>
            <person name="Pavan W.J."/>
            <person name="Pavesi G."/>
            <person name="Pesole G."/>
            <person name="Petrovsky N."/>
            <person name="Piazza S."/>
            <person name="Reed J."/>
            <person name="Reid J.F."/>
            <person name="Ring B.Z."/>
            <person name="Ringwald M."/>
            <person name="Rost B."/>
            <person name="Ruan Y."/>
            <person name="Salzberg S.L."/>
            <person name="Sandelin A."/>
            <person name="Schneider C."/>
            <person name="Schoenbach C."/>
            <person name="Sekiguchi K."/>
            <person name="Semple C.A."/>
            <person name="Seno S."/>
            <person name="Sessa L."/>
            <person name="Sheng Y."/>
            <person name="Shibata Y."/>
            <person name="Shimada H."/>
            <person name="Shimada K."/>
            <person name="Silva D."/>
            <person name="Sinclair B."/>
            <person name="Sperling S."/>
            <person name="Stupka E."/>
            <person name="Sugiura K."/>
            <person name="Sultana R."/>
            <person name="Takenaka Y."/>
            <person name="Taki K."/>
            <person name="Tammoja K."/>
            <person name="Tan S.L."/>
            <person name="Tang S."/>
            <person name="Taylor M.S."/>
            <person name="Tegner J."/>
            <person name="Teichmann S.A."/>
            <person name="Ueda H.R."/>
            <person name="van Nimwegen E."/>
            <person name="Verardo R."/>
            <person name="Wei C.L."/>
            <person name="Yagi K."/>
            <person name="Yamanishi H."/>
            <person name="Zabarovsky E."/>
            <person name="Zhu S."/>
            <person name="Zimmer A."/>
            <person name="Hide W."/>
            <person name="Bult C."/>
            <person name="Grimmond S.M."/>
            <person name="Teasdale R.D."/>
            <person name="Liu E.T."/>
            <person name="Brusic V."/>
            <person name="Quackenbush J."/>
            <person name="Wahlestedt C."/>
            <person name="Mattick J.S."/>
            <person name="Hume D.A."/>
            <person name="Kai C."/>
            <person name="Sasaki D."/>
            <person name="Tomaru Y."/>
            <person name="Fukuda S."/>
            <person name="Kanamori-Katayama M."/>
            <person name="Suzuki M."/>
            <person name="Aoki J."/>
            <person name="Arakawa T."/>
            <person name="Iida J."/>
            <person name="Imamura K."/>
            <person name="Itoh M."/>
            <person name="Kato T."/>
            <person name="Kawaji H."/>
            <person name="Kawagashira N."/>
            <person name="Kawashima T."/>
            <person name="Kojima M."/>
            <person name="Kondo S."/>
            <person name="Konno H."/>
            <person name="Nakano K."/>
            <person name="Ninomiya N."/>
            <person name="Nishio T."/>
            <person name="Okada M."/>
            <person name="Plessy C."/>
            <person name="Shibata K."/>
            <person name="Shiraki T."/>
            <person name="Suzuki S."/>
            <person name="Tagami M."/>
            <person name="Waki K."/>
            <person name="Watahiki A."/>
            <person name="Okamura-Oho Y."/>
            <person name="Suzuki H."/>
            <person name="Kawai J."/>
            <person name="Hayashizaki Y."/>
        </authorList>
    </citation>
    <scope>NUCLEOTIDE SEQUENCE [LARGE SCALE MRNA]</scope>
    <source>
        <strain>C57BL/6J</strain>
        <tissue>Brain cortex</tissue>
    </source>
</reference>
<reference key="8">
    <citation type="journal article" date="2004" name="Genome Res.">
        <title>The status, quality, and expansion of the NIH full-length cDNA project: the Mammalian Gene Collection (MGC).</title>
        <authorList>
            <consortium name="The MGC Project Team"/>
        </authorList>
    </citation>
    <scope>NUCLEOTIDE SEQUENCE [LARGE SCALE MRNA]</scope>
    <source>
        <strain>C57BL/6J</strain>
        <tissue>Brain</tissue>
    </source>
</reference>
<reference key="9">
    <citation type="journal article" date="2000" name="Neuroscience">
        <title>Cannabinoid receptor messenger RNA levels decrease in a subset of neurons of the lateral striatum, cortex and hippocampus of transgenic Huntington's disease mice.</title>
        <authorList>
            <person name="Denovan-Wright E.M."/>
            <person name="Robertson H.A."/>
        </authorList>
    </citation>
    <scope>TISSUE SPECIFICITY</scope>
</reference>
<reference key="10">
    <citation type="journal article" date="2005" name="J. Clin. Invest.">
        <title>Endocannabinoid activation at hepatic CB1 receptors stimulates fatty acid synthesis and contributes to diet-induced obesity.</title>
        <authorList>
            <person name="Osei-Hyiaman D."/>
            <person name="DePetrillo M."/>
            <person name="Pacher P."/>
            <person name="Liu J."/>
            <person name="Radaeva S."/>
            <person name="Batkai S."/>
            <person name="Harvey-White J."/>
            <person name="Mackie K."/>
            <person name="Offertaler L."/>
            <person name="Wang L."/>
            <person name="Kunos G."/>
        </authorList>
    </citation>
    <scope>FUNCTION</scope>
    <scope>SUBCELLULAR LOCATION</scope>
    <scope>INDUCTION BY HIGH-FAT DIET</scope>
    <scope>TISSUE SPECIFICITY</scope>
    <scope>DISRUPTION PHENOTYPE</scope>
    <scope>INVOLVEMENT IN OBESITY</scope>
</reference>
<reference key="11">
    <citation type="journal article" date="2010" name="Cell">
        <title>A tissue-specific atlas of mouse protein phosphorylation and expression.</title>
        <authorList>
            <person name="Huttlin E.L."/>
            <person name="Jedrychowski M.P."/>
            <person name="Elias J.E."/>
            <person name="Goswami T."/>
            <person name="Rad R."/>
            <person name="Beausoleil S.A."/>
            <person name="Villen J."/>
            <person name="Haas W."/>
            <person name="Sowa M.E."/>
            <person name="Gygi S.P."/>
        </authorList>
    </citation>
    <scope>PHOSPHORYLATION [LARGE SCALE ANALYSIS] AT SER-426 AND SER-430</scope>
    <scope>IDENTIFICATION BY MASS SPECTROMETRY [LARGE SCALE ANALYSIS]</scope>
    <source>
        <tissue>Brain</tissue>
    </source>
</reference>
<reference key="12">
    <citation type="journal article" date="2012" name="Cell Metab.">
        <title>Peripheral cannabinoid-1 receptor inverse agonism reduces obesity by reversing leptin resistance.</title>
        <authorList>
            <person name="Tam J."/>
            <person name="Cinar R."/>
            <person name="Liu J."/>
            <person name="Godlewski G."/>
            <person name="Wesley D."/>
            <person name="Jourdan T."/>
            <person name="Szanda G."/>
            <person name="Mukhopadhyay B."/>
            <person name="Chedester L."/>
            <person name="Liow J.S."/>
            <person name="Innis R.B."/>
            <person name="Cheng K."/>
            <person name="Rice K.C."/>
            <person name="Deschamps J.R."/>
            <person name="Chorvat R.J."/>
            <person name="McElroy J.F."/>
            <person name="Kunos G."/>
        </authorList>
    </citation>
    <scope>FUNCTION</scope>
    <scope>POTENTIAL INVOLVEMENT IN OBESITY</scope>
</reference>
<reference key="13">
    <citation type="journal article" date="2012" name="Hepatology">
        <title>Antagonism of peripheral hepatic cannabinoid receptor-1 improves liver lipid metabolism in mice: evidence from cultured explants.</title>
        <authorList>
            <person name="Jourdan T."/>
            <person name="Demizieux L."/>
            <person name="Gresti J."/>
            <person name="Djaouti L."/>
            <person name="Gaba L."/>
            <person name="Verges B."/>
            <person name="Degrace P."/>
        </authorList>
    </citation>
    <scope>FUNCTION</scope>
    <scope>TISSUE SPECIFICITY</scope>
    <scope>INDUCTION BY ENDOCANNABINOID ANANDAMIDE AND HIGH-FAT DIET</scope>
    <scope>INVOLVEMENT IN OBESITY</scope>
</reference>
<reference key="14">
    <citation type="journal article" date="2012" name="Nat. Neurosci.">
        <title>Mitochondrial CB(1) receptors regulate neuronal energy metabolism.</title>
        <authorList>
            <person name="Benard G."/>
            <person name="Massa F."/>
            <person name="Puente N."/>
            <person name="Lourenco J."/>
            <person name="Bellocchio L."/>
            <person name="Soria-Gomez E."/>
            <person name="Matias I."/>
            <person name="Delamarre A."/>
            <person name="Metna-Laurent M."/>
            <person name="Cannich A."/>
            <person name="Hebert-Chatelain E."/>
            <person name="Mulle C."/>
            <person name="Ortega-Gutierrez S."/>
            <person name="Martin-Fontecha M."/>
            <person name="Klugmann M."/>
            <person name="Guggenhuber S."/>
            <person name="Lutz B."/>
            <person name="Gertsch J."/>
            <person name="Chaouloff F."/>
            <person name="Lopez-Rodriguez M.L."/>
            <person name="Grandes P."/>
            <person name="Rossignol R."/>
            <person name="Marsicano G."/>
        </authorList>
    </citation>
    <scope>FUNCTION</scope>
    <scope>SUBCELLULAR LOCATION</scope>
    <scope>TISSUE SPECIFICITY</scope>
    <scope>TOPOLOGY</scope>
</reference>
<reference key="15">
    <citation type="journal article" date="2013" name="Nat. Med.">
        <title>Activation of the Nlrp3 inflammasome in infiltrating macrophages by endocannabinoids mediates beta cell loss in type 2 diabetes.</title>
        <authorList>
            <person name="Jourdan T."/>
            <person name="Godlewski G."/>
            <person name="Cinar R."/>
            <person name="Bertola A."/>
            <person name="Szanda G."/>
            <person name="Liu J."/>
            <person name="Tam J."/>
            <person name="Han T."/>
            <person name="Mukhopadhyay B."/>
            <person name="Skarulis M.C."/>
            <person name="Ju C."/>
            <person name="Aouadi M."/>
            <person name="Czech M.P."/>
            <person name="Kunos G."/>
        </authorList>
    </citation>
    <scope>FUNCTION</scope>
    <scope>INDUCTION BY ENDOCANNABINOID ANANDAMIDE AND IL1B</scope>
</reference>
<reference key="16">
    <citation type="journal article" date="2015" name="J. Biol. Chem.">
        <title>Negative regulation of leptin-induced reactive oxygen species (ROS) formation by cannabinoid CB1 receptor activation in hypothalamic neurons.</title>
        <authorList>
            <person name="Palomba L."/>
            <person name="Silvestri C."/>
            <person name="Imperatore R."/>
            <person name="Morello G."/>
            <person name="Piscitelli F."/>
            <person name="Martella A."/>
            <person name="Cristino L."/>
            <person name="Di Marzo V."/>
        </authorList>
    </citation>
    <scope>FUNCTION</scope>
    <scope>TISSUE SPECIFICITY</scope>
</reference>
<reference key="17">
    <citation type="journal article" date="2015" name="Nature">
        <title>Hypothalamic POMC neurons promote cannabinoid-induced feeding.</title>
        <authorList>
            <person name="Koch M."/>
            <person name="Varela L."/>
            <person name="Kim J.G."/>
            <person name="Kim J.D."/>
            <person name="Hernandez-Nuno F."/>
            <person name="Simonds S.E."/>
            <person name="Castorena C.M."/>
            <person name="Vianna C.R."/>
            <person name="Elmquist J.K."/>
            <person name="Morozov Y.M."/>
            <person name="Rakic P."/>
            <person name="Bechmann I."/>
            <person name="Cowley M.A."/>
            <person name="Szigeti-Buck K."/>
            <person name="Dietrich M.O."/>
            <person name="Gao X.B."/>
            <person name="Diano S."/>
            <person name="Horvath T.L."/>
        </authorList>
    </citation>
    <scope>FUNCTION</scope>
    <scope>SUBCELLULAR LOCATION</scope>
    <scope>TISSUE SPECIFICITY</scope>
    <scope>INVOLVEMENT IN OBESITY</scope>
</reference>
<reference key="18">
    <citation type="journal article" date="2015" name="PLoS ONE">
        <title>Pharmacological blockade of cannabinoid CB1 receptors in diet-induced obesity regulates mitochondrial dihydrolipoamide dehydrogenase in muscle.</title>
        <authorList>
            <person name="Arrabal S."/>
            <person name="Lucena M.A."/>
            <person name="Canduela M.J."/>
            <person name="Ramos-Uriarte A."/>
            <person name="Rivera P."/>
            <person name="Serrano A."/>
            <person name="Pavon F.J."/>
            <person name="Decara J."/>
            <person name="Vargas A."/>
            <person name="Baixeras E."/>
            <person name="Martin-Rufian M."/>
            <person name="Marquez J."/>
            <person name="Fernandez-Llebrez P."/>
            <person name="De Roos B."/>
            <person name="Grandes P."/>
            <person name="Rodriguez de Fonseca F."/>
            <person name="Suarez J."/>
        </authorList>
    </citation>
    <scope>FUNCTION</scope>
    <scope>TISSUE SPECIFICITY</scope>
    <scope>SUBCELLULAR LOCATION</scope>
    <scope>INVOLVEMENT IN OBESITY</scope>
</reference>
<reference key="19">
    <citation type="journal article" date="2016" name="Front. Physiol.">
        <title>Cannabinoid CB1 receptors are localized in striated muscle mitochondria and regulate mitochondrial respiration.</title>
        <authorList>
            <person name="Mendizabal-Zubiaga J."/>
            <person name="Melser S."/>
            <person name="Benard G."/>
            <person name="Ramos A."/>
            <person name="Reguero L."/>
            <person name="Arrabal S."/>
            <person name="Elezgarai I."/>
            <person name="Gerrikagoitia I."/>
            <person name="Suarez J."/>
            <person name="Rodriguez De Fonseca F."/>
            <person name="Puente N."/>
            <person name="Marsicano G."/>
            <person name="Grandes P."/>
        </authorList>
    </citation>
    <scope>SUBCELLULAR LOCATION</scope>
    <scope>TISSUE SPECIFICITY</scope>
</reference>
<reference key="20">
    <citation type="journal article" date="2016" name="Nature">
        <title>A cannabinoid link between mitochondria and memory.</title>
        <authorList>
            <person name="Hebert-Chatelain E."/>
            <person name="Desprez T."/>
            <person name="Serrat R."/>
            <person name="Bellocchio L."/>
            <person name="Soria-Gomez E."/>
            <person name="Busquets-Garcia A."/>
            <person name="Pagano Zottola A.C."/>
            <person name="Delamarre A."/>
            <person name="Cannich A."/>
            <person name="Vincent P."/>
            <person name="Varilh M."/>
            <person name="Robin L.M."/>
            <person name="Terral G."/>
            <person name="Garcia-Fernandez M.D."/>
            <person name="Colavita M."/>
            <person name="Mazier W."/>
            <person name="Drago F."/>
            <person name="Puente N."/>
            <person name="Reguero L."/>
            <person name="Elezgarai I."/>
            <person name="Dupuy J.W."/>
            <person name="Cota D."/>
            <person name="Lopez-Rodriguez M.L."/>
            <person name="Barreda-Gomez G."/>
            <person name="Massa F."/>
            <person name="Grandes P."/>
            <person name="Benard G."/>
            <person name="Marsicano G."/>
        </authorList>
    </citation>
    <scope>FUNCTION</scope>
    <scope>INTERACTION WITH G PROTEIN ALPHA SUBUNITS</scope>
    <scope>SUBCELLULAR LOCATION</scope>
    <scope>MUTAGENESIS OF 1-MET--TYR-22</scope>
</reference>
<comment type="function">
    <text evidence="1 3 8 9 10 11 12 13 14 15 17 18 19">G-protein coupled receptor for cannabinoids, including endocannabinoids (eCBs), such as N-arachidonoylethanolamide (also called anandamide or AEA) and 2-arachidonoylglycerol (2-AG) (PubMed:22388959, PubMed:9888857). Mediates many cannabinoid-induced effects, acting, among others, on food intake, memory loss, gastrointestinal motility, catalepsy, ambulatory activity, anxiety, chronic pain (PubMed:27828947, PubMed:9888857). Signaling typically involves reduction in cyclic AMP (PubMed:27828947, PubMed:8832654). In the hypothalamus, may have a dual effect on mitochondrial respiration depending upon the agonist dose and possibly upon the cell type. Increases respiration at low doses, while decreases respiration at high doses (PubMed:25707796, PubMed:27828947). At high doses, CNR1 signal transduction involves G-protein alpha-i protein activation and subsequent inhibition of mitochondrial soluble adenylate cyclase, decrease in cyclic AMP concentration, inhibition of protein kinase A (PKA)-dependent phosphorylation of specific subunits of the mitochondrial electron transport system, including NDUFS2 (PubMed:27828947). In the hypothalamus, inhibits leptin-induced reactive oxygen species (ROS) formation and mediates cannabinoid-induced increase in SREBF1 and FASN gene expression (PubMed:25869131). In response to cannabinoids, drives the release of orexigenic beta-endorphin, but not that of melanocyte-stimulating hormone alpha/alpha-MSH, from hypothalamic POMC neurons, hence promoting food intake (PubMed:25707796). In the hippocampus, regulates cellular respiration and energy production in response to cannabinoids. Involved in cannabinoid-dependent depolarization-induced suppression of inhibition (DSI), a process in which depolarization of CA1 postsynaptic pyramidal neurons mobilizes eCBs, which retrogradely activate presynaptic CB1 receptors, transiently decreasing GABAergic inhibitory neurotransmission (PubMed:22388959). Also reduces excitatory synaptic transmission (PubMed:27828947). In superior cervical ganglions and cerebral vascular smooth muscle cells, inhibits voltage-gated Ca(2+) channels in a constitutive, as well as agonist-dependent manner (By similarity). In cerebral vascular smooth muscle cells, cannabinoid-induced inhibition of voltage-gated Ca(2+) channels leads to vasodilation and decreased vascular tone (By similarity). Induces leptin production in adipocytes and reduces LRP2-mediated leptin clearance in the kidney, hence participating in hyperleptinemia (PubMed:22841573). In adipose tissue, CNR1 signaling leads to increased expression of SREBF1, ACACA and FASN genes (PubMed:15864349). In the liver, activation by endocannabinoids leads to increased de novo lipogenesis and reduced fatty acid catabolism, associated with increased expression of SREBF1/SREBP-1, GCK, ACACA, ACACB and FASN genes (PubMed:15864349, PubMed:21987372). May also affect de novo cholesterol synthesis and HDL-cholesteryl ether uptake (PubMed:21987372). Peripherally modulates energy metabolism. In high carbohydrate diet-induced obesity, may decrease the expression of mitochondrial dihydrolipoyl dehydrogenase/DLD in striated muscles, as well as that of selected glucose/ pyruvate metabolic enzymes, hence affecting energy expenditure through mitochondrial metabolism (PubMed:26671069). In response to cannabinoid anandamide, elicits a pro-inflammatory response in macrophages, which involves NLRP3 inflammasome activation and IL1B and IL18 secretion. In macrophages infiltrating pancreatic islets, this process may participate in the progression of type-2 diabetes and associated loss of pancreatic beta-cells (PubMed:23955712).</text>
</comment>
<comment type="activity regulation">
    <text evidence="3">Hemopressin, a peptide derived from hemoglobin subunit alpha (HBA1 and/or HBA2), acts as an antagonist peptide: hemopressin-binding efficiently blocks cannabinoid receptor CNR1 and subsequent signaling.</text>
</comment>
<comment type="subunit">
    <text evidence="3 17">Interacts (via C-terminus) with CNRIP1 (By similarity). Associates with G protein alpha subunits, including G(i) alpha-1/GNAI1, G(i) alpha-3/GNAI3 and G(o)-alpha/GNAO1; palmitoylation is important for interaction with GNAI3 and GNAO1 (PubMed:27828947).</text>
</comment>
<comment type="subcellular location">
    <subcellularLocation>
        <location evidence="8 13 17">Cell membrane</location>
        <topology evidence="3">Multi-pass membrane protein</topology>
    </subcellularLocation>
    <subcellularLocation>
        <location evidence="10 13 15 16 17">Mitochondrion outer membrane</location>
    </subcellularLocation>
    <subcellularLocation>
        <location evidence="2">Cell projection</location>
        <location evidence="2">Axon</location>
    </subcellularLocation>
    <subcellularLocation>
        <location evidence="2">Presynapse</location>
    </subcellularLocation>
    <text evidence="2 10 16">In CA1 hippocampal neurons, 15.5% of total protein is localized in mitochondria (PubMed:22388959). Found on presynaptic axon terminals in some GABAergic neurons in the somatosensory cortex (By similarity). In striated muscles, predominantly located in mitochondria (PubMed:27826249). Unexpectedly, in the mitochondria, the C-terminus is located in the mitochondrial intermembrane space, a compartment topologically considered as extracellular. In canonical seven-transmembrane G-protein coupled receptors, the C-terminus is cytosolic (PubMed:22388959).</text>
</comment>
<comment type="tissue specificity">
    <text evidence="6 7 8 9 10 13 14 15 16">Expressed in brain neurons (at protein level) (PubMed:22388959). Detected throughout the striatum, cortex and hippocampus, with highest levels in the lateral striatum (PubMed:10891614, PubMed:15606779, PubMed:22388959). In rostral brain regions, high expression levels in the dorsal lateral striatum, while in the caudal brain regions, high levels are observed in the ventral lateral striatum (PubMed:10891614). Expressed in neurons (PubMed:10891614). In the hypothalamus, expressed in both GABAergic and glutamatergic presynaptic terminals of POMC neurons (at protein level) (PubMed:25707796, PubMed:25869131). Expressed in striated muscles, including skeletal muscles (gastrocnemius and rectus abdominis) and myocardium (at protein level) (PubMed:26671069, PubMed:27826249). Expressed in the liver, with highest levels in Kupffer cells and lower levels in endothelial cells as well as hepatocytes, particularly in perivascular areas (at protein level) (PubMed:15864349, PubMed:21987372). The hepatic expression level is up-regulated in obese mice compared to lean animals (PubMed:21987372).</text>
</comment>
<comment type="induction">
    <text evidence="8 9 12">Up-regulated by endocannabinoid anandamide/AEA (PubMed:21987372, PubMed:23955712). Down-regulated by IL1B (PubMed:23955712). Up-regulated in the liver of animals on a high-fat diet compared to regular diet (PubMed:15864349, PubMed:21987372).</text>
</comment>
<comment type="PTM">
    <text evidence="2">Palmitoylation at Cys-416 is important for recruitment at both plasma membrane and lipid rafts and association with G protein alpha subunits.</text>
</comment>
<comment type="disease">
    <text evidence="8 9 11 13 15">May contribute to the development of diet-induced obesity and several obesity-associated features, such as dyslipidemia and liver steatosis, regulating peripheral lipogenesis, energy expenditure and feeding behavior. In the liver, mediates cannabinoid-induced de novo lipogenesis and reduces fatty acid catabolism (PubMed:15864349, PubMed:21987372). In muscles, affects energy expenditure through mitochondrial metabolism (PubMed:22841573, PubMed:26671069). Induces leptin production by adipocytes and reduces LRP2-mediated leptin clearance in the kidney. The resulting hyperleptinemia causes resistance to the anorexic and weight-reducing effects of leptin (PubMed:22841573). In response to cannabinoids, drives the release of orexigenic beta-endorphin from hypothalamic POMC neurons, hence promoting food intake (PubMed:25707796). The use of peripherally-restricted inverse agonists in diet-induced obese mice reduces appetite, body weight, hepatic steatosis, and insulin resistance (PubMed:22841573).</text>
</comment>
<comment type="disruption phenotype">
    <text evidence="8 19">No visible phenotype, although mutant mice present a mild impairment in the adaptation to new environment. Mutant mice do not respond to cannabinoids, such as anandamide. The acute effects of opiates are not affected, but the reinforcing properties of morphine and the severity of the withdrawal syndrome are strongly reduced (PubMed:9888857). On high-fat diet, mutant mice remain lean, their metabolic and hormonal profile are unchanged, and they do not develop fatty liver, despite having caloric intake similar to that of wild-type mice (PubMed:15864349).</text>
</comment>
<comment type="miscellaneous">
    <text evidence="8">High-fat diet also increases the hepatic levels of CNR1 ligand anandamide, but not that of 2-arachidonoylglycerol.</text>
</comment>
<comment type="similarity">
    <text evidence="5">Belongs to the G-protein coupled receptor 1 family.</text>
</comment>
<keyword id="KW-1003">Cell membrane</keyword>
<keyword id="KW-0966">Cell projection</keyword>
<keyword id="KW-0297">G-protein coupled receptor</keyword>
<keyword id="KW-0325">Glycoprotein</keyword>
<keyword id="KW-0449">Lipoprotein</keyword>
<keyword id="KW-0472">Membrane</keyword>
<keyword id="KW-0496">Mitochondrion</keyword>
<keyword id="KW-1000">Mitochondrion outer membrane</keyword>
<keyword id="KW-0550">Obesity</keyword>
<keyword id="KW-0564">Palmitate</keyword>
<keyword id="KW-0597">Phosphoprotein</keyword>
<keyword id="KW-0675">Receptor</keyword>
<keyword id="KW-1185">Reference proteome</keyword>
<keyword id="KW-0770">Synapse</keyword>
<keyword id="KW-0807">Transducer</keyword>
<keyword id="KW-0812">Transmembrane</keyword>
<keyword id="KW-1133">Transmembrane helix</keyword>
<proteinExistence type="evidence at protein level"/>
<name>CNR1_MOUSE</name>
<gene>
    <name type="primary">Cnr1</name>
</gene>
<accession>P47746</accession>
<accession>Q5SF33</accession>